<accession>P44880</accession>
<proteinExistence type="evidence at protein level"/>
<reference key="1">
    <citation type="journal article" date="1995" name="Science">
        <title>Whole-genome random sequencing and assembly of Haemophilus influenzae Rd.</title>
        <authorList>
            <person name="Fleischmann R.D."/>
            <person name="Adams M.D."/>
            <person name="White O."/>
            <person name="Clayton R.A."/>
            <person name="Kirkness E.F."/>
            <person name="Kerlavage A.R."/>
            <person name="Bult C.J."/>
            <person name="Tomb J.-F."/>
            <person name="Dougherty B.A."/>
            <person name="Merrick J.M."/>
            <person name="McKenney K."/>
            <person name="Sutton G.G."/>
            <person name="FitzHugh W."/>
            <person name="Fields C.A."/>
            <person name="Gocayne J.D."/>
            <person name="Scott J.D."/>
            <person name="Shirley R."/>
            <person name="Liu L.-I."/>
            <person name="Glodek A."/>
            <person name="Kelley J.M."/>
            <person name="Weidman J.F."/>
            <person name="Phillips C.A."/>
            <person name="Spriggs T."/>
            <person name="Hedblom E."/>
            <person name="Cotton M.D."/>
            <person name="Utterback T.R."/>
            <person name="Hanna M.C."/>
            <person name="Nguyen D.T."/>
            <person name="Saudek D.M."/>
            <person name="Brandon R.C."/>
            <person name="Fine L.D."/>
            <person name="Fritchman J.L."/>
            <person name="Fuhrmann J.L."/>
            <person name="Geoghagen N.S.M."/>
            <person name="Gnehm C.L."/>
            <person name="McDonald L.A."/>
            <person name="Small K.V."/>
            <person name="Fraser C.M."/>
            <person name="Smith H.O."/>
            <person name="Venter J.C."/>
        </authorList>
    </citation>
    <scope>NUCLEOTIDE SEQUENCE [LARGE SCALE GENOMIC DNA]</scope>
    <source>
        <strain>ATCC 51907 / DSM 11121 / KW20 / Rd</strain>
    </source>
</reference>
<reference key="2">
    <citation type="journal article" date="2001" name="Structure">
        <title>Structure of the universal stress protein of Haemophilus influenzae.</title>
        <authorList>
            <person name="Sousa M.C."/>
            <person name="McKay D.B."/>
        </authorList>
    </citation>
    <scope>X-RAY CRYSTALLOGRAPHY (1.85 ANGSTROMS)</scope>
    <source>
        <strain>ATCC 51907 / DSM 11121 / KW20 / Rd</strain>
    </source>
</reference>
<protein>
    <recommendedName>
        <fullName>Universal stress protein A homolog</fullName>
    </recommendedName>
</protein>
<dbReference type="EMBL" id="L42023">
    <property type="protein sequence ID" value="AAC22474.1"/>
    <property type="molecule type" value="Genomic_DNA"/>
</dbReference>
<dbReference type="PIR" id="A64096">
    <property type="entry name" value="A64096"/>
</dbReference>
<dbReference type="RefSeq" id="NP_438975.1">
    <property type="nucleotide sequence ID" value="NC_000907.1"/>
</dbReference>
<dbReference type="PDB" id="1JMV">
    <property type="method" value="X-ray"/>
    <property type="resolution" value="1.85 A"/>
    <property type="chains" value="A/B/C/D=1-141"/>
</dbReference>
<dbReference type="PDBsum" id="1JMV"/>
<dbReference type="SMR" id="P44880"/>
<dbReference type="STRING" id="71421.HI_0815"/>
<dbReference type="EnsemblBacteria" id="AAC22474">
    <property type="protein sequence ID" value="AAC22474"/>
    <property type="gene ID" value="HI_0815"/>
</dbReference>
<dbReference type="KEGG" id="hin:HI_0815"/>
<dbReference type="PATRIC" id="fig|71421.8.peg.856"/>
<dbReference type="eggNOG" id="COG0589">
    <property type="taxonomic scope" value="Bacteria"/>
</dbReference>
<dbReference type="HOGENOM" id="CLU_049301_18_0_6"/>
<dbReference type="OrthoDB" id="9792500at2"/>
<dbReference type="PhylomeDB" id="P44880"/>
<dbReference type="BioCyc" id="HINF71421:G1GJ1-856-MONOMER"/>
<dbReference type="EvolutionaryTrace" id="P44880"/>
<dbReference type="Proteomes" id="UP000000579">
    <property type="component" value="Chromosome"/>
</dbReference>
<dbReference type="GO" id="GO:0005737">
    <property type="term" value="C:cytoplasm"/>
    <property type="evidence" value="ECO:0007669"/>
    <property type="project" value="UniProtKB-SubCell"/>
</dbReference>
<dbReference type="GO" id="GO:0006950">
    <property type="term" value="P:response to stress"/>
    <property type="evidence" value="ECO:0000318"/>
    <property type="project" value="GO_Central"/>
</dbReference>
<dbReference type="CDD" id="cd23657">
    <property type="entry name" value="USP-A-like"/>
    <property type="match status" value="1"/>
</dbReference>
<dbReference type="Gene3D" id="3.40.50.620">
    <property type="entry name" value="HUPs"/>
    <property type="match status" value="1"/>
</dbReference>
<dbReference type="InterPro" id="IPR014729">
    <property type="entry name" value="Rossmann-like_a/b/a_fold"/>
</dbReference>
<dbReference type="InterPro" id="IPR006015">
    <property type="entry name" value="Universal_stress_UspA"/>
</dbReference>
<dbReference type="InterPro" id="IPR006016">
    <property type="entry name" value="UspA"/>
</dbReference>
<dbReference type="NCBIfam" id="NF011698">
    <property type="entry name" value="PRK15118.1"/>
    <property type="match status" value="1"/>
</dbReference>
<dbReference type="PANTHER" id="PTHR46268">
    <property type="entry name" value="STRESS RESPONSE PROTEIN NHAX"/>
    <property type="match status" value="1"/>
</dbReference>
<dbReference type="PANTHER" id="PTHR46268:SF23">
    <property type="entry name" value="UNIVERSAL STRESS PROTEIN A-RELATED"/>
    <property type="match status" value="1"/>
</dbReference>
<dbReference type="Pfam" id="PF00582">
    <property type="entry name" value="Usp"/>
    <property type="match status" value="1"/>
</dbReference>
<dbReference type="PIRSF" id="PIRSF006276">
    <property type="entry name" value="UspA"/>
    <property type="match status" value="1"/>
</dbReference>
<dbReference type="SUPFAM" id="SSF52402">
    <property type="entry name" value="Adenine nucleotide alpha hydrolases-like"/>
    <property type="match status" value="1"/>
</dbReference>
<gene>
    <name type="primary">uspA</name>
    <name type="ordered locus">HI_0815</name>
</gene>
<evidence type="ECO:0000250" key="1"/>
<evidence type="ECO:0000305" key="2"/>
<evidence type="ECO:0007829" key="3">
    <source>
        <dbReference type="PDB" id="1JMV"/>
    </source>
</evidence>
<keyword id="KW-0002">3D-structure</keyword>
<keyword id="KW-0963">Cytoplasm</keyword>
<keyword id="KW-1185">Reference proteome</keyword>
<comment type="function">
    <text evidence="1">Required for resistance to DNA-damaging agents.</text>
</comment>
<comment type="subunit">
    <text>Homodimer.</text>
</comment>
<comment type="subcellular location">
    <subcellularLocation>
        <location evidence="1">Cytoplasm</location>
    </subcellularLocation>
</comment>
<comment type="miscellaneous">
    <text>Unlike MJ0577, UspA shows no evidence of ATP binding activity.</text>
</comment>
<comment type="similarity">
    <text evidence="2">Belongs to the universal stress protein A family.</text>
</comment>
<organism>
    <name type="scientific">Haemophilus influenzae (strain ATCC 51907 / DSM 11121 / KW20 / Rd)</name>
    <dbReference type="NCBI Taxonomy" id="71421"/>
    <lineage>
        <taxon>Bacteria</taxon>
        <taxon>Pseudomonadati</taxon>
        <taxon>Pseudomonadota</taxon>
        <taxon>Gammaproteobacteria</taxon>
        <taxon>Pasteurellales</taxon>
        <taxon>Pasteurellaceae</taxon>
        <taxon>Haemophilus</taxon>
    </lineage>
</organism>
<feature type="chain" id="PRO_0000147400" description="Universal stress protein A homolog">
    <location>
        <begin position="1"/>
        <end position="141"/>
    </location>
</feature>
<feature type="strand" evidence="3">
    <location>
        <begin position="3"/>
        <end position="9"/>
    </location>
</feature>
<feature type="helix" evidence="3">
    <location>
        <begin position="15"/>
        <end position="29"/>
    </location>
</feature>
<feature type="strand" evidence="3">
    <location>
        <begin position="32"/>
        <end position="40"/>
    </location>
</feature>
<feature type="helix" evidence="3">
    <location>
        <begin position="43"/>
        <end position="45"/>
    </location>
</feature>
<feature type="helix" evidence="3">
    <location>
        <begin position="52"/>
        <end position="57"/>
    </location>
</feature>
<feature type="helix" evidence="3">
    <location>
        <begin position="64"/>
        <end position="75"/>
    </location>
</feature>
<feature type="strand" evidence="3">
    <location>
        <begin position="76"/>
        <end position="78"/>
    </location>
</feature>
<feature type="strand" evidence="3">
    <location>
        <begin position="83"/>
        <end position="88"/>
    </location>
</feature>
<feature type="helix" evidence="3">
    <location>
        <begin position="90"/>
        <end position="100"/>
    </location>
</feature>
<feature type="strand" evidence="3">
    <location>
        <begin position="105"/>
        <end position="110"/>
    </location>
</feature>
<feature type="helix" evidence="3">
    <location>
        <begin position="115"/>
        <end position="126"/>
    </location>
</feature>
<feature type="strand" evidence="3">
    <location>
        <begin position="131"/>
        <end position="137"/>
    </location>
</feature>
<name>USPA_HAEIN</name>
<sequence>MYKHILVAVDLSEESPILLKKAVGIAKRHDAKLSIIHVDVNFSDLYTGLIDVNMSSMQDRISTETQKALLDLAESVDYPISEKLSGSGDLGQVLSDAIEQYDVDLLVTGHHQDFWSKLMSSTRQVMNTIKIDMLVVPLRDE</sequence>